<accession>A7KAM3</accession>
<accession>B6GXN4</accession>
<feature type="chain" id="PRO_0000317936" description="Ubiquitin-like protein ATG12">
    <location>
        <begin position="1"/>
        <end position="172"/>
    </location>
</feature>
<feature type="region of interest" description="Disordered" evidence="2">
    <location>
        <begin position="1"/>
        <end position="55"/>
    </location>
</feature>
<feature type="compositionally biased region" description="Low complexity" evidence="2">
    <location>
        <begin position="1"/>
        <end position="21"/>
    </location>
</feature>
<feature type="cross-link" description="Glycyl lysine isopeptide (Gly-Lys) (interchain with K-153 in atg5)" evidence="1">
    <location>
        <position position="172"/>
    </location>
</feature>
<proteinExistence type="inferred from homology"/>
<sequence length="172" mass="18695">MNTSSPTRSPQSSPSPNPQSTLSHRPSPRQPQSSDTPPNSSANAPIPDDEHGADLPMNMTASVMLTNLPRDAHQALADVESIDSGKVTVRFQPLPSAPILKNRVFKVSASQKFETVVKFLRKKLDCKDTDSVFCYVNSVFAPGLDEGMGGLWRCFKTDDQLIVAYSMTPAFG</sequence>
<evidence type="ECO:0000250" key="1"/>
<evidence type="ECO:0000256" key="2">
    <source>
        <dbReference type="SAM" id="MobiDB-lite"/>
    </source>
</evidence>
<evidence type="ECO:0000269" key="3">
    <source>
    </source>
</evidence>
<evidence type="ECO:0000305" key="4"/>
<dbReference type="EMBL" id="EF107745">
    <property type="protein sequence ID" value="ABO31083.1"/>
    <property type="molecule type" value="Genomic_DNA"/>
</dbReference>
<dbReference type="EMBL" id="AM920427">
    <property type="protein sequence ID" value="CAP80430.1"/>
    <property type="molecule type" value="Genomic_DNA"/>
</dbReference>
<dbReference type="RefSeq" id="XP_002557636.1">
    <property type="nucleotide sequence ID" value="XM_002557590.1"/>
</dbReference>
<dbReference type="SMR" id="A7KAM3"/>
<dbReference type="STRING" id="500485.A7KAM3"/>
<dbReference type="GeneID" id="8309062"/>
<dbReference type="KEGG" id="pcs:N7525_001755"/>
<dbReference type="VEuPathDB" id="FungiDB:PCH_Pc12g08030"/>
<dbReference type="eggNOG" id="KOG3439">
    <property type="taxonomic scope" value="Eukaryota"/>
</dbReference>
<dbReference type="HOGENOM" id="CLU_106795_1_2_1"/>
<dbReference type="OMA" id="DLPMNMS"/>
<dbReference type="OrthoDB" id="10003551at2759"/>
<dbReference type="BioCyc" id="PCHR:PC12G08030-MONOMER"/>
<dbReference type="Proteomes" id="UP000000724">
    <property type="component" value="Contig Pc00c12"/>
</dbReference>
<dbReference type="GO" id="GO:0034274">
    <property type="term" value="C:Atg12-Atg5-Atg16 complex"/>
    <property type="evidence" value="ECO:0007669"/>
    <property type="project" value="TreeGrafter"/>
</dbReference>
<dbReference type="GO" id="GO:0000421">
    <property type="term" value="C:autophagosome membrane"/>
    <property type="evidence" value="ECO:0007669"/>
    <property type="project" value="TreeGrafter"/>
</dbReference>
<dbReference type="GO" id="GO:0034045">
    <property type="term" value="C:phagophore assembly site membrane"/>
    <property type="evidence" value="ECO:0007669"/>
    <property type="project" value="UniProtKB-SubCell"/>
</dbReference>
<dbReference type="GO" id="GO:0019776">
    <property type="term" value="F:Atg8-family ligase activity"/>
    <property type="evidence" value="ECO:0007669"/>
    <property type="project" value="TreeGrafter"/>
</dbReference>
<dbReference type="GO" id="GO:0000045">
    <property type="term" value="P:autophagosome assembly"/>
    <property type="evidence" value="ECO:0007669"/>
    <property type="project" value="InterPro"/>
</dbReference>
<dbReference type="GO" id="GO:0097352">
    <property type="term" value="P:autophagosome maturation"/>
    <property type="evidence" value="ECO:0007669"/>
    <property type="project" value="TreeGrafter"/>
</dbReference>
<dbReference type="GO" id="GO:0000422">
    <property type="term" value="P:autophagy of mitochondrion"/>
    <property type="evidence" value="ECO:0007669"/>
    <property type="project" value="TreeGrafter"/>
</dbReference>
<dbReference type="GO" id="GO:0061723">
    <property type="term" value="P:glycophagy"/>
    <property type="evidence" value="ECO:0007669"/>
    <property type="project" value="TreeGrafter"/>
</dbReference>
<dbReference type="GO" id="GO:0034727">
    <property type="term" value="P:piecemeal microautophagy of the nucleus"/>
    <property type="evidence" value="ECO:0007669"/>
    <property type="project" value="TreeGrafter"/>
</dbReference>
<dbReference type="GO" id="GO:0015031">
    <property type="term" value="P:protein transport"/>
    <property type="evidence" value="ECO:0007669"/>
    <property type="project" value="UniProtKB-KW"/>
</dbReference>
<dbReference type="CDD" id="cd01612">
    <property type="entry name" value="Ubl_ATG12"/>
    <property type="match status" value="1"/>
</dbReference>
<dbReference type="FunFam" id="3.10.20.90:FF:000148">
    <property type="entry name" value="Ubiquitin-like protein ATG12"/>
    <property type="match status" value="1"/>
</dbReference>
<dbReference type="Gene3D" id="3.10.20.90">
    <property type="entry name" value="Phosphatidylinositol 3-kinase Catalytic Subunit, Chain A, domain 1"/>
    <property type="match status" value="1"/>
</dbReference>
<dbReference type="InterPro" id="IPR007242">
    <property type="entry name" value="Atg12"/>
</dbReference>
<dbReference type="InterPro" id="IPR029071">
    <property type="entry name" value="Ubiquitin-like_domsf"/>
</dbReference>
<dbReference type="PANTHER" id="PTHR13385">
    <property type="entry name" value="AUTOPHAGY PROTEIN 12"/>
    <property type="match status" value="1"/>
</dbReference>
<dbReference type="PANTHER" id="PTHR13385:SF0">
    <property type="entry name" value="UBIQUITIN-LIKE PROTEIN ATG12"/>
    <property type="match status" value="1"/>
</dbReference>
<dbReference type="Pfam" id="PF04110">
    <property type="entry name" value="APG12"/>
    <property type="match status" value="1"/>
</dbReference>
<dbReference type="SUPFAM" id="SSF54236">
    <property type="entry name" value="Ubiquitin-like"/>
    <property type="match status" value="1"/>
</dbReference>
<comment type="function">
    <text evidence="1 3">Ubiquitin-like protein involved in cytoplasm to vacuole transport (Cvt), autophagy vesicles formation, mitophagy, and nucleophagy. Conjugation with atg5 through a ubiquitin-like conjugating system involving also atg7 as an E1-like activating enzyme and atg10 as an E2-like conjugating enzyme, is essential for its function. The atg12-atg5 conjugate functions as an E3-like enzyme which is required for lipidation of atg8 and atg8 association to the vesicle membranes (By similarity).</text>
</comment>
<comment type="subunit">
    <text evidence="1">Forms a conjugate with atg5.</text>
</comment>
<comment type="subcellular location">
    <subcellularLocation>
        <location evidence="1">Preautophagosomal structure membrane</location>
        <topology evidence="1">Peripheral membrane protein</topology>
    </subcellularLocation>
</comment>
<comment type="similarity">
    <text evidence="4">Belongs to the ATG12 family.</text>
</comment>
<name>ATG12_PENRW</name>
<organism>
    <name type="scientific">Penicillium rubens (strain ATCC 28089 / DSM 1075 / NRRL 1951 / Wisconsin 54-1255)</name>
    <name type="common">Penicillium chrysogenum</name>
    <dbReference type="NCBI Taxonomy" id="500485"/>
    <lineage>
        <taxon>Eukaryota</taxon>
        <taxon>Fungi</taxon>
        <taxon>Dikarya</taxon>
        <taxon>Ascomycota</taxon>
        <taxon>Pezizomycotina</taxon>
        <taxon>Eurotiomycetes</taxon>
        <taxon>Eurotiomycetidae</taxon>
        <taxon>Eurotiales</taxon>
        <taxon>Aspergillaceae</taxon>
        <taxon>Penicillium</taxon>
        <taxon>Penicillium chrysogenum species complex</taxon>
    </lineage>
</organism>
<gene>
    <name type="primary">atg12</name>
    <name type="ORF">Pc12g08030</name>
</gene>
<keyword id="KW-0072">Autophagy</keyword>
<keyword id="KW-1017">Isopeptide bond</keyword>
<keyword id="KW-0472">Membrane</keyword>
<keyword id="KW-0653">Protein transport</keyword>
<keyword id="KW-1185">Reference proteome</keyword>
<keyword id="KW-0813">Transport</keyword>
<keyword id="KW-0833">Ubl conjugation pathway</keyword>
<reference key="1">
    <citation type="journal article" date="2007" name="Autophagy">
        <title>ATG genes involved in non-selective autophagy are conserved from yeast to man, but the selective Cvt and pexophagy pathways also require organism-specific genes.</title>
        <authorList>
            <person name="Meijer W.H."/>
            <person name="van der Klei I.J."/>
            <person name="Veenhuis M."/>
            <person name="Kiel J.A.K.W."/>
        </authorList>
    </citation>
    <scope>NUCLEOTIDE SEQUENCE [GENOMIC DNA]</scope>
    <scope>FUNCTION</scope>
</reference>
<reference key="2">
    <citation type="journal article" date="2008" name="Nat. Biotechnol.">
        <title>Genome sequencing and analysis of the filamentous fungus Penicillium chrysogenum.</title>
        <authorList>
            <person name="van den Berg M.A."/>
            <person name="Albang R."/>
            <person name="Albermann K."/>
            <person name="Badger J.H."/>
            <person name="Daran J.-M."/>
            <person name="Driessen A.J.M."/>
            <person name="Garcia-Estrada C."/>
            <person name="Fedorova N.D."/>
            <person name="Harris D.M."/>
            <person name="Heijne W.H.M."/>
            <person name="Joardar V.S."/>
            <person name="Kiel J.A.K.W."/>
            <person name="Kovalchuk A."/>
            <person name="Martin J.F."/>
            <person name="Nierman W.C."/>
            <person name="Nijland J.G."/>
            <person name="Pronk J.T."/>
            <person name="Roubos J.A."/>
            <person name="van der Klei I.J."/>
            <person name="van Peij N.N.M.E."/>
            <person name="Veenhuis M."/>
            <person name="von Doehren H."/>
            <person name="Wagner C."/>
            <person name="Wortman J.R."/>
            <person name="Bovenberg R.A.L."/>
        </authorList>
    </citation>
    <scope>NUCLEOTIDE SEQUENCE [LARGE SCALE GENOMIC DNA]</scope>
    <source>
        <strain>ATCC 28089 / DSM 1075 / NRRL 1951 / Wisconsin 54-1255</strain>
    </source>
</reference>
<protein>
    <recommendedName>
        <fullName>Ubiquitin-like protein ATG12</fullName>
    </recommendedName>
    <alternativeName>
        <fullName>Autophagy-related protein 12</fullName>
    </alternativeName>
</protein>